<proteinExistence type="inferred from homology"/>
<gene>
    <name evidence="1" type="primary">atpD</name>
    <name type="ordered locus">CPS_0062</name>
</gene>
<reference key="1">
    <citation type="journal article" date="2005" name="Proc. Natl. Acad. Sci. U.S.A.">
        <title>The psychrophilic lifestyle as revealed by the genome sequence of Colwellia psychrerythraea 34H through genomic and proteomic analyses.</title>
        <authorList>
            <person name="Methe B.A."/>
            <person name="Nelson K.E."/>
            <person name="Deming J.W."/>
            <person name="Momen B."/>
            <person name="Melamud E."/>
            <person name="Zhang X."/>
            <person name="Moult J."/>
            <person name="Madupu R."/>
            <person name="Nelson W.C."/>
            <person name="Dodson R.J."/>
            <person name="Brinkac L.M."/>
            <person name="Daugherty S.C."/>
            <person name="Durkin A.S."/>
            <person name="DeBoy R.T."/>
            <person name="Kolonay J.F."/>
            <person name="Sullivan S.A."/>
            <person name="Zhou L."/>
            <person name="Davidsen T.M."/>
            <person name="Wu M."/>
            <person name="Huston A.L."/>
            <person name="Lewis M."/>
            <person name="Weaver B."/>
            <person name="Weidman J.F."/>
            <person name="Khouri H."/>
            <person name="Utterback T.R."/>
            <person name="Feldblyum T.V."/>
            <person name="Fraser C.M."/>
        </authorList>
    </citation>
    <scope>NUCLEOTIDE SEQUENCE [LARGE SCALE GENOMIC DNA]</scope>
    <source>
        <strain>34H / ATCC BAA-681</strain>
    </source>
</reference>
<dbReference type="EC" id="7.1.2.2" evidence="1"/>
<dbReference type="EMBL" id="CP000083">
    <property type="protein sequence ID" value="AAZ26635.1"/>
    <property type="molecule type" value="Genomic_DNA"/>
</dbReference>
<dbReference type="RefSeq" id="WP_011040937.1">
    <property type="nucleotide sequence ID" value="NC_003910.7"/>
</dbReference>
<dbReference type="SMR" id="Q48AW0"/>
<dbReference type="STRING" id="167879.CPS_0062"/>
<dbReference type="KEGG" id="cps:CPS_0062"/>
<dbReference type="eggNOG" id="COG0055">
    <property type="taxonomic scope" value="Bacteria"/>
</dbReference>
<dbReference type="HOGENOM" id="CLU_022398_0_2_6"/>
<dbReference type="Proteomes" id="UP000000547">
    <property type="component" value="Chromosome"/>
</dbReference>
<dbReference type="GO" id="GO:0005886">
    <property type="term" value="C:plasma membrane"/>
    <property type="evidence" value="ECO:0007669"/>
    <property type="project" value="UniProtKB-SubCell"/>
</dbReference>
<dbReference type="GO" id="GO:0045259">
    <property type="term" value="C:proton-transporting ATP synthase complex"/>
    <property type="evidence" value="ECO:0007669"/>
    <property type="project" value="UniProtKB-KW"/>
</dbReference>
<dbReference type="GO" id="GO:0005524">
    <property type="term" value="F:ATP binding"/>
    <property type="evidence" value="ECO:0007669"/>
    <property type="project" value="UniProtKB-UniRule"/>
</dbReference>
<dbReference type="GO" id="GO:0016887">
    <property type="term" value="F:ATP hydrolysis activity"/>
    <property type="evidence" value="ECO:0007669"/>
    <property type="project" value="InterPro"/>
</dbReference>
<dbReference type="GO" id="GO:0046933">
    <property type="term" value="F:proton-transporting ATP synthase activity, rotational mechanism"/>
    <property type="evidence" value="ECO:0007669"/>
    <property type="project" value="UniProtKB-UniRule"/>
</dbReference>
<dbReference type="CDD" id="cd18110">
    <property type="entry name" value="ATP-synt_F1_beta_C"/>
    <property type="match status" value="1"/>
</dbReference>
<dbReference type="CDD" id="cd18115">
    <property type="entry name" value="ATP-synt_F1_beta_N"/>
    <property type="match status" value="1"/>
</dbReference>
<dbReference type="CDD" id="cd01133">
    <property type="entry name" value="F1-ATPase_beta_CD"/>
    <property type="match status" value="1"/>
</dbReference>
<dbReference type="FunFam" id="1.10.1140.10:FF:000001">
    <property type="entry name" value="ATP synthase subunit beta"/>
    <property type="match status" value="1"/>
</dbReference>
<dbReference type="FunFam" id="2.40.10.170:FF:000003">
    <property type="entry name" value="ATP synthase subunit beta"/>
    <property type="match status" value="1"/>
</dbReference>
<dbReference type="FunFam" id="3.40.50.300:FF:000004">
    <property type="entry name" value="ATP synthase subunit beta"/>
    <property type="match status" value="1"/>
</dbReference>
<dbReference type="Gene3D" id="2.40.10.170">
    <property type="match status" value="1"/>
</dbReference>
<dbReference type="Gene3D" id="1.10.1140.10">
    <property type="entry name" value="Bovine Mitochondrial F1-atpase, Atp Synthase Beta Chain, Chain D, domain 3"/>
    <property type="match status" value="1"/>
</dbReference>
<dbReference type="Gene3D" id="3.40.50.300">
    <property type="entry name" value="P-loop containing nucleotide triphosphate hydrolases"/>
    <property type="match status" value="1"/>
</dbReference>
<dbReference type="HAMAP" id="MF_01347">
    <property type="entry name" value="ATP_synth_beta_bact"/>
    <property type="match status" value="1"/>
</dbReference>
<dbReference type="InterPro" id="IPR003593">
    <property type="entry name" value="AAA+_ATPase"/>
</dbReference>
<dbReference type="InterPro" id="IPR055190">
    <property type="entry name" value="ATP-synt_VA_C"/>
</dbReference>
<dbReference type="InterPro" id="IPR005722">
    <property type="entry name" value="ATP_synth_F1_bsu"/>
</dbReference>
<dbReference type="InterPro" id="IPR020003">
    <property type="entry name" value="ATPase_a/bsu_AS"/>
</dbReference>
<dbReference type="InterPro" id="IPR050053">
    <property type="entry name" value="ATPase_alpha/beta_chains"/>
</dbReference>
<dbReference type="InterPro" id="IPR004100">
    <property type="entry name" value="ATPase_F1/V1/A1_a/bsu_N"/>
</dbReference>
<dbReference type="InterPro" id="IPR036121">
    <property type="entry name" value="ATPase_F1/V1/A1_a/bsu_N_sf"/>
</dbReference>
<dbReference type="InterPro" id="IPR000194">
    <property type="entry name" value="ATPase_F1/V1/A1_a/bsu_nucl-bd"/>
</dbReference>
<dbReference type="InterPro" id="IPR024034">
    <property type="entry name" value="ATPase_F1/V1_b/a_C"/>
</dbReference>
<dbReference type="InterPro" id="IPR027417">
    <property type="entry name" value="P-loop_NTPase"/>
</dbReference>
<dbReference type="NCBIfam" id="TIGR01039">
    <property type="entry name" value="atpD"/>
    <property type="match status" value="1"/>
</dbReference>
<dbReference type="PANTHER" id="PTHR15184">
    <property type="entry name" value="ATP SYNTHASE"/>
    <property type="match status" value="1"/>
</dbReference>
<dbReference type="PANTHER" id="PTHR15184:SF71">
    <property type="entry name" value="ATP SYNTHASE SUBUNIT BETA, MITOCHONDRIAL"/>
    <property type="match status" value="1"/>
</dbReference>
<dbReference type="Pfam" id="PF00006">
    <property type="entry name" value="ATP-synt_ab"/>
    <property type="match status" value="1"/>
</dbReference>
<dbReference type="Pfam" id="PF02874">
    <property type="entry name" value="ATP-synt_ab_N"/>
    <property type="match status" value="1"/>
</dbReference>
<dbReference type="Pfam" id="PF22919">
    <property type="entry name" value="ATP-synt_VA_C"/>
    <property type="match status" value="1"/>
</dbReference>
<dbReference type="SMART" id="SM00382">
    <property type="entry name" value="AAA"/>
    <property type="match status" value="1"/>
</dbReference>
<dbReference type="SUPFAM" id="SSF47917">
    <property type="entry name" value="C-terminal domain of alpha and beta subunits of F1 ATP synthase"/>
    <property type="match status" value="1"/>
</dbReference>
<dbReference type="SUPFAM" id="SSF50615">
    <property type="entry name" value="N-terminal domain of alpha and beta subunits of F1 ATP synthase"/>
    <property type="match status" value="1"/>
</dbReference>
<dbReference type="SUPFAM" id="SSF52540">
    <property type="entry name" value="P-loop containing nucleoside triphosphate hydrolases"/>
    <property type="match status" value="1"/>
</dbReference>
<dbReference type="PROSITE" id="PS00152">
    <property type="entry name" value="ATPASE_ALPHA_BETA"/>
    <property type="match status" value="1"/>
</dbReference>
<comment type="function">
    <text evidence="1">Produces ATP from ADP in the presence of a proton gradient across the membrane. The catalytic sites are hosted primarily by the beta subunits.</text>
</comment>
<comment type="catalytic activity">
    <reaction evidence="1">
        <text>ATP + H2O + 4 H(+)(in) = ADP + phosphate + 5 H(+)(out)</text>
        <dbReference type="Rhea" id="RHEA:57720"/>
        <dbReference type="ChEBI" id="CHEBI:15377"/>
        <dbReference type="ChEBI" id="CHEBI:15378"/>
        <dbReference type="ChEBI" id="CHEBI:30616"/>
        <dbReference type="ChEBI" id="CHEBI:43474"/>
        <dbReference type="ChEBI" id="CHEBI:456216"/>
        <dbReference type="EC" id="7.1.2.2"/>
    </reaction>
</comment>
<comment type="subunit">
    <text evidence="1">F-type ATPases have 2 components, CF(1) - the catalytic core - and CF(0) - the membrane proton channel. CF(1) has five subunits: alpha(3), beta(3), gamma(1), delta(1), epsilon(1). CF(0) has three main subunits: a(1), b(2) and c(9-12). The alpha and beta chains form an alternating ring which encloses part of the gamma chain. CF(1) is attached to CF(0) by a central stalk formed by the gamma and epsilon chains, while a peripheral stalk is formed by the delta and b chains.</text>
</comment>
<comment type="subcellular location">
    <subcellularLocation>
        <location evidence="1">Cell inner membrane</location>
        <topology evidence="1">Peripheral membrane protein</topology>
    </subcellularLocation>
</comment>
<comment type="similarity">
    <text evidence="1">Belongs to the ATPase alpha/beta chains family.</text>
</comment>
<name>ATPB_COLP3</name>
<keyword id="KW-0066">ATP synthesis</keyword>
<keyword id="KW-0067">ATP-binding</keyword>
<keyword id="KW-0997">Cell inner membrane</keyword>
<keyword id="KW-1003">Cell membrane</keyword>
<keyword id="KW-0139">CF(1)</keyword>
<keyword id="KW-0375">Hydrogen ion transport</keyword>
<keyword id="KW-0406">Ion transport</keyword>
<keyword id="KW-0472">Membrane</keyword>
<keyword id="KW-0547">Nucleotide-binding</keyword>
<keyword id="KW-1278">Translocase</keyword>
<keyword id="KW-0813">Transport</keyword>
<sequence>MSTGKVVQIIGAVVDVEFPQDAVPQVYDALKITEGDLEGLVLEVQQQLGGGVVRTIAMGTSDGLRRGLNVVNTGQGIQVPVGVETLGRIMNVLGEPIDEAGPIGEKDRWSIHREAPAYAEQSMSNELLETGIKVIDLVCPFAKGGKVGLFGGAGVGKTVNMMELIRNIAIEHSGYSVFAGVGERTREGNDFYHEMNDSNVLDKVSLVYGQMNEPPGNRLRVAFTGLTMAEKFRDEGRDVLFFVDNIYRYTLAGTEVSALLGRMPSAVGYQPTLAEEMGVLQERITSTNKGSITSIQAVYVPADDLTDPSPATTFAHLDATVVLSRDIASQGIYPAIDPLDSSSRQLDPLVVGTEHYETARGVQTVLQRYKELKDIIAILGMDELSEEDKQTVSRARKIQRYLSQPFFVAEVFTGSPGKYVSLKDTIAGFKGILAGEYDDMPEQAFYMVGGIEEAIEKANKM</sequence>
<organism>
    <name type="scientific">Colwellia psychrerythraea (strain 34H / ATCC BAA-681)</name>
    <name type="common">Vibrio psychroerythus</name>
    <dbReference type="NCBI Taxonomy" id="167879"/>
    <lineage>
        <taxon>Bacteria</taxon>
        <taxon>Pseudomonadati</taxon>
        <taxon>Pseudomonadota</taxon>
        <taxon>Gammaproteobacteria</taxon>
        <taxon>Alteromonadales</taxon>
        <taxon>Colwelliaceae</taxon>
        <taxon>Colwellia</taxon>
    </lineage>
</organism>
<accession>Q48AW0</accession>
<feature type="chain" id="PRO_0000254243" description="ATP synthase subunit beta">
    <location>
        <begin position="1"/>
        <end position="461"/>
    </location>
</feature>
<feature type="binding site" evidence="1">
    <location>
        <begin position="151"/>
        <end position="158"/>
    </location>
    <ligand>
        <name>ATP</name>
        <dbReference type="ChEBI" id="CHEBI:30616"/>
    </ligand>
</feature>
<protein>
    <recommendedName>
        <fullName evidence="1">ATP synthase subunit beta</fullName>
        <ecNumber evidence="1">7.1.2.2</ecNumber>
    </recommendedName>
    <alternativeName>
        <fullName evidence="1">ATP synthase F1 sector subunit beta</fullName>
    </alternativeName>
    <alternativeName>
        <fullName evidence="1">F-ATPase subunit beta</fullName>
    </alternativeName>
</protein>
<evidence type="ECO:0000255" key="1">
    <source>
        <dbReference type="HAMAP-Rule" id="MF_01347"/>
    </source>
</evidence>